<feature type="chain" id="PRO_0000079294" description="Calprismin" evidence="1">
    <location>
        <begin position="1"/>
        <end position="61" status="greater than"/>
    </location>
</feature>
<feature type="non-terminal residue" evidence="2">
    <location>
        <position position="61"/>
    </location>
</feature>
<reference evidence="3" key="1">
    <citation type="journal article" date="2005" name="J. Biol. Chem.">
        <title>Caspartin and calprismin, two proteins of the shell calcitic prisms of the Mediterranean fan mussel Pinna nobilis.</title>
        <authorList>
            <person name="Marin F."/>
            <person name="Amons R."/>
            <person name="Guichard N."/>
            <person name="Stigter M."/>
            <person name="Hecker A."/>
            <person name="Luquet G."/>
            <person name="Layrolle P."/>
            <person name="Alcaraz G."/>
            <person name="Riondet C."/>
            <person name="Westbroek P."/>
        </authorList>
    </citation>
    <scope>PROTEIN SEQUENCE</scope>
    <scope>TISSUE SPECIFICITY</scope>
    <scope>GLYCOSYLATION</scope>
    <scope>INTERACTION WITH CALCIUM CARBONATE</scope>
    <source>
        <tissue evidence="1">Eggshell matrix</tissue>
    </source>
</reference>
<evidence type="ECO:0000269" key="1">
    <source>
    </source>
</evidence>
<evidence type="ECO:0000303" key="2">
    <source>
    </source>
</evidence>
<evidence type="ECO:0000305" key="3"/>
<proteinExistence type="evidence at protein level"/>
<keyword id="KW-0903">Direct protein sequencing</keyword>
<keyword id="KW-0325">Glycoprotein</keyword>
<accession>P83631</accession>
<protein>
    <recommendedName>
        <fullName>Calprismin</fullName>
    </recommendedName>
</protein>
<sequence>ITIEQGELVLNCISDKMMCEFEAAAEMVVPSPCPSEYDTCILETNIPPANQXPVHXIPXMH</sequence>
<name>CPRM_PINNO</name>
<organism>
    <name type="scientific">Pinna nobilis</name>
    <name type="common">Noble pen shell</name>
    <dbReference type="NCBI Taxonomy" id="111169"/>
    <lineage>
        <taxon>Eukaryota</taxon>
        <taxon>Metazoa</taxon>
        <taxon>Spiralia</taxon>
        <taxon>Lophotrochozoa</taxon>
        <taxon>Mollusca</taxon>
        <taxon>Bivalvia</taxon>
        <taxon>Autobranchia</taxon>
        <taxon>Pteriomorphia</taxon>
        <taxon>Pterioida</taxon>
        <taxon>Pinnoidea</taxon>
        <taxon>Pinnidae</taxon>
        <taxon>Pinna</taxon>
    </lineage>
</organism>
<comment type="tissue specificity">
    <text evidence="1">Expressed by the calcifying mantle epithelium and incorporated into the shell's calcitic prismatic layer.</text>
</comment>
<comment type="PTM">
    <text evidence="1">Glycosylated.</text>
</comment>
<comment type="miscellaneous">
    <text evidence="1">Seems to interact with calcium carbonate.</text>
</comment>